<proteinExistence type="evidence at protein level"/>
<reference key="1">
    <citation type="submission" date="2005-01" db="EMBL/GenBank/DDBJ databases">
        <title>Analysis of sequences obtained from constructed full-length bovine cDNA libraries.</title>
        <authorList>
            <person name="Yu J."/>
            <person name="Meng Y."/>
            <person name="Wang Z."/>
            <person name="Hansen C."/>
            <person name="Li C."/>
            <person name="Moore S.S."/>
        </authorList>
    </citation>
    <scope>NUCLEOTIDE SEQUENCE [LARGE SCALE MRNA]</scope>
    <source>
        <tissue>Lymphoid epithelium</tissue>
    </source>
</reference>
<reference key="2">
    <citation type="submission" date="2006-01" db="EMBL/GenBank/DDBJ databases">
        <authorList>
            <consortium name="NIH - Mammalian Gene Collection (MGC) project"/>
        </authorList>
    </citation>
    <scope>NUCLEOTIDE SEQUENCE [LARGE SCALE MRNA]</scope>
    <source>
        <strain>Hereford</strain>
        <tissue>Testis</tissue>
    </source>
</reference>
<reference key="3">
    <citation type="journal article" date="2001" name="J. Biol. Chem.">
        <title>The small subunit of the mammalian mitochondrial ribosome: identification of the full complement of ribosomal proteins present.</title>
        <authorList>
            <person name="Koc E.C."/>
            <person name="Burkhart W."/>
            <person name="Blackburn K."/>
            <person name="Moseley A."/>
            <person name="Spremulli L.L."/>
        </authorList>
    </citation>
    <scope>PROTEIN SEQUENCE OF 48-66 AND 75-119</scope>
    <scope>SUBCELLULAR LOCATION</scope>
    <scope>SUBUNIT</scope>
    <source>
        <tissue>Liver</tissue>
    </source>
</reference>
<reference evidence="4" key="4">
    <citation type="journal article" date="2014" name="Proc. Natl. Acad. Sci. U.S.A.">
        <title>Cryo-EM structure of the small subunit of the mammalian mitochondrial ribosome.</title>
        <authorList>
            <person name="Kaushal P.S."/>
            <person name="Sharma M.R."/>
            <person name="Booth T.M."/>
            <person name="Haque E.M."/>
            <person name="Tung C.S."/>
            <person name="Sanbonmatsu K.Y."/>
            <person name="Spremulli L.L."/>
            <person name="Agrawal R.K."/>
        </authorList>
    </citation>
    <scope>STRUCTURE BY ELECTRON MICROSCOPY (7.00 ANGSTROMS)</scope>
    <scope>SUBCELLULAR LOCATION</scope>
    <scope>SUBUNIT</scope>
</reference>
<gene>
    <name type="primary">MRPS17</name>
    <name type="synonym">RPMS17</name>
</gene>
<evidence type="ECO:0000269" key="1">
    <source>
    </source>
</evidence>
<evidence type="ECO:0000269" key="2">
    <source>
    </source>
</evidence>
<evidence type="ECO:0000305" key="3"/>
<evidence type="ECO:0007744" key="4">
    <source>
        <dbReference type="PDB" id="3JD5"/>
    </source>
</evidence>
<evidence type="ECO:0007829" key="5">
    <source>
        <dbReference type="PDB" id="6NEQ"/>
    </source>
</evidence>
<evidence type="ECO:0007829" key="6">
    <source>
        <dbReference type="PDB" id="6NF8"/>
    </source>
</evidence>
<accession>P82916</accession>
<accession>Q2NKU7</accession>
<accession>Q56K01</accession>
<name>RT17_BOVIN</name>
<comment type="subunit">
    <text evidence="1 2">Component of the mitochondrial ribosome small subunit (28S) which comprises a 12S rRNA and about 30 distinct proteins.</text>
</comment>
<comment type="subcellular location">
    <subcellularLocation>
        <location evidence="1 2">Mitochondrion</location>
    </subcellularLocation>
</comment>
<comment type="similarity">
    <text evidence="3">Belongs to the universal ribosomal protein uS17 family.</text>
</comment>
<feature type="chain" id="PRO_0000128524" description="Small ribosomal subunit protein uS17m">
    <location>
        <begin position="1"/>
        <end position="130"/>
    </location>
</feature>
<feature type="sequence conflict" description="In Ref. 3; AA sequence." evidence="3" ref="3">
    <original>Q</original>
    <variation>E</variation>
    <location>
        <position position="56"/>
    </location>
</feature>
<feature type="sequence conflict" description="In Ref. 1; AAW82094." evidence="3" ref="1">
    <original>P</original>
    <variation>S</variation>
    <location>
        <position position="70"/>
    </location>
</feature>
<feature type="strand" evidence="5">
    <location>
        <begin position="11"/>
        <end position="14"/>
    </location>
</feature>
<feature type="strand" evidence="5">
    <location>
        <begin position="16"/>
        <end position="19"/>
    </location>
</feature>
<feature type="strand" evidence="5">
    <location>
        <begin position="25"/>
        <end position="35"/>
    </location>
</feature>
<feature type="turn" evidence="5">
    <location>
        <begin position="37"/>
        <end position="39"/>
    </location>
</feature>
<feature type="strand" evidence="5">
    <location>
        <begin position="42"/>
        <end position="52"/>
    </location>
</feature>
<feature type="strand" evidence="5">
    <location>
        <begin position="54"/>
        <end position="56"/>
    </location>
</feature>
<feature type="strand" evidence="5">
    <location>
        <begin position="63"/>
        <end position="68"/>
    </location>
</feature>
<feature type="strand" evidence="5">
    <location>
        <begin position="73"/>
        <end position="76"/>
    </location>
</feature>
<feature type="strand" evidence="5">
    <location>
        <begin position="79"/>
        <end position="87"/>
    </location>
</feature>
<feature type="strand" evidence="6">
    <location>
        <begin position="91"/>
        <end position="93"/>
    </location>
</feature>
<feature type="turn" evidence="5">
    <location>
        <begin position="94"/>
        <end position="97"/>
    </location>
</feature>
<feature type="strand" evidence="6">
    <location>
        <begin position="98"/>
        <end position="100"/>
    </location>
</feature>
<feature type="strand" evidence="5">
    <location>
        <begin position="101"/>
        <end position="104"/>
    </location>
</feature>
<sequence>MSVVRSSVHAKWIVGKVIGTAMQKTAKVRVTRLVLDPYLLKYFNKRKTYFAHDALQQCTVGDIVLLKALPVPRTKHVKHELAEIVFKVGQVVDPVTGKRCAGTTYLESPVDLETTPLAKNLEELSLSTTQ</sequence>
<organism>
    <name type="scientific">Bos taurus</name>
    <name type="common">Bovine</name>
    <dbReference type="NCBI Taxonomy" id="9913"/>
    <lineage>
        <taxon>Eukaryota</taxon>
        <taxon>Metazoa</taxon>
        <taxon>Chordata</taxon>
        <taxon>Craniata</taxon>
        <taxon>Vertebrata</taxon>
        <taxon>Euteleostomi</taxon>
        <taxon>Mammalia</taxon>
        <taxon>Eutheria</taxon>
        <taxon>Laurasiatheria</taxon>
        <taxon>Artiodactyla</taxon>
        <taxon>Ruminantia</taxon>
        <taxon>Pecora</taxon>
        <taxon>Bovidae</taxon>
        <taxon>Bovinae</taxon>
        <taxon>Bos</taxon>
    </lineage>
</organism>
<protein>
    <recommendedName>
        <fullName evidence="3">Small ribosomal subunit protein uS17m</fullName>
    </recommendedName>
    <alternativeName>
        <fullName>28S ribosomal protein S17, mitochondrial</fullName>
        <shortName>MRP-S17</shortName>
        <shortName>S17mt</shortName>
    </alternativeName>
</protein>
<dbReference type="EMBL" id="AY911326">
    <property type="protein sequence ID" value="AAW82094.1"/>
    <property type="molecule type" value="mRNA"/>
</dbReference>
<dbReference type="EMBL" id="BC111630">
    <property type="protein sequence ID" value="AAI11631.1"/>
    <property type="molecule type" value="mRNA"/>
</dbReference>
<dbReference type="RefSeq" id="NP_001019671.1">
    <property type="nucleotide sequence ID" value="NM_001024500.2"/>
</dbReference>
<dbReference type="RefSeq" id="XP_005224930.1">
    <property type="nucleotide sequence ID" value="XM_005224873.4"/>
</dbReference>
<dbReference type="PDB" id="3JD5">
    <property type="method" value="EM"/>
    <property type="resolution" value="7.00 A"/>
    <property type="chains" value="Q=1-130"/>
</dbReference>
<dbReference type="PDB" id="6NEQ">
    <property type="method" value="EM"/>
    <property type="resolution" value="3.32 A"/>
    <property type="chains" value="Q=1-130"/>
</dbReference>
<dbReference type="PDB" id="6NF8">
    <property type="method" value="EM"/>
    <property type="resolution" value="3.48 A"/>
    <property type="chains" value="Q=1-130"/>
</dbReference>
<dbReference type="PDBsum" id="3JD5"/>
<dbReference type="PDBsum" id="6NEQ"/>
<dbReference type="PDBsum" id="6NF8"/>
<dbReference type="EMDB" id="EMD-9358"/>
<dbReference type="EMDB" id="EMD-9362"/>
<dbReference type="SMR" id="P82916"/>
<dbReference type="CORUM" id="P82916"/>
<dbReference type="FunCoup" id="P82916">
    <property type="interactions" value="2764"/>
</dbReference>
<dbReference type="IntAct" id="P82916">
    <property type="interactions" value="2"/>
</dbReference>
<dbReference type="STRING" id="9913.ENSBTAP00000069784"/>
<dbReference type="PaxDb" id="9913-ENSBTAP00000010431"/>
<dbReference type="Ensembl" id="ENSBTAT00000010431.2">
    <property type="protein sequence ID" value="ENSBTAP00000010431.1"/>
    <property type="gene ID" value="ENSBTAG00000007934.5"/>
</dbReference>
<dbReference type="GeneID" id="508143"/>
<dbReference type="KEGG" id="bta:508143"/>
<dbReference type="CTD" id="51373"/>
<dbReference type="VEuPathDB" id="HostDB:ENSBTAG00000007934"/>
<dbReference type="VGNC" id="VGNC:110052">
    <property type="gene designation" value="MRPS17"/>
</dbReference>
<dbReference type="eggNOG" id="KOG3447">
    <property type="taxonomic scope" value="Eukaryota"/>
</dbReference>
<dbReference type="GeneTree" id="ENSGT00530000064130"/>
<dbReference type="HOGENOM" id="CLU_073626_5_0_1"/>
<dbReference type="InParanoid" id="P82916"/>
<dbReference type="OMA" id="TVHAKWI"/>
<dbReference type="OrthoDB" id="274752at2759"/>
<dbReference type="TreeFam" id="TF326484"/>
<dbReference type="Reactome" id="R-BTA-5389840">
    <property type="pathway name" value="Mitochondrial translation elongation"/>
</dbReference>
<dbReference type="Reactome" id="R-BTA-5419276">
    <property type="pathway name" value="Mitochondrial translation termination"/>
</dbReference>
<dbReference type="Proteomes" id="UP000009136">
    <property type="component" value="Chromosome 25"/>
</dbReference>
<dbReference type="Bgee" id="ENSBTAG00000007934">
    <property type="expression patterns" value="Expressed in oocyte and 102 other cell types or tissues"/>
</dbReference>
<dbReference type="GO" id="GO:0005743">
    <property type="term" value="C:mitochondrial inner membrane"/>
    <property type="evidence" value="ECO:0000304"/>
    <property type="project" value="Reactome"/>
</dbReference>
<dbReference type="GO" id="GO:0005763">
    <property type="term" value="C:mitochondrial small ribosomal subunit"/>
    <property type="evidence" value="ECO:0000314"/>
    <property type="project" value="UniProtKB"/>
</dbReference>
<dbReference type="GO" id="GO:0019843">
    <property type="term" value="F:rRNA binding"/>
    <property type="evidence" value="ECO:0007669"/>
    <property type="project" value="UniProtKB-KW"/>
</dbReference>
<dbReference type="GO" id="GO:0003735">
    <property type="term" value="F:structural constituent of ribosome"/>
    <property type="evidence" value="ECO:0007669"/>
    <property type="project" value="InterPro"/>
</dbReference>
<dbReference type="GO" id="GO:0006412">
    <property type="term" value="P:translation"/>
    <property type="evidence" value="ECO:0007669"/>
    <property type="project" value="InterPro"/>
</dbReference>
<dbReference type="CDD" id="cd00364">
    <property type="entry name" value="Ribosomal_uS17"/>
    <property type="match status" value="1"/>
</dbReference>
<dbReference type="FunFam" id="2.40.50.140:FF:000137">
    <property type="entry name" value="28S ribosomal protein S17, mitochondrial"/>
    <property type="match status" value="1"/>
</dbReference>
<dbReference type="Gene3D" id="2.40.50.140">
    <property type="entry name" value="Nucleic acid-binding proteins"/>
    <property type="match status" value="1"/>
</dbReference>
<dbReference type="InterPro" id="IPR012340">
    <property type="entry name" value="NA-bd_OB-fold"/>
</dbReference>
<dbReference type="InterPro" id="IPR000266">
    <property type="entry name" value="Ribosomal_uS17"/>
</dbReference>
<dbReference type="InterPro" id="IPR039193">
    <property type="entry name" value="Ribosomal_uS17m_metazoa"/>
</dbReference>
<dbReference type="PANTHER" id="PTHR24088">
    <property type="entry name" value="28S RIBOSOMAL PROTEIN S17, MITOCHONDRIAL"/>
    <property type="match status" value="1"/>
</dbReference>
<dbReference type="PANTHER" id="PTHR24088:SF0">
    <property type="entry name" value="SMALL RIBOSOMAL SUBUNIT PROTEIN US17M"/>
    <property type="match status" value="1"/>
</dbReference>
<dbReference type="Pfam" id="PF00366">
    <property type="entry name" value="Ribosomal_S17"/>
    <property type="match status" value="1"/>
</dbReference>
<dbReference type="SUPFAM" id="SSF50249">
    <property type="entry name" value="Nucleic acid-binding proteins"/>
    <property type="match status" value="1"/>
</dbReference>
<keyword id="KW-0002">3D-structure</keyword>
<keyword id="KW-0903">Direct protein sequencing</keyword>
<keyword id="KW-0496">Mitochondrion</keyword>
<keyword id="KW-1185">Reference proteome</keyword>
<keyword id="KW-0687">Ribonucleoprotein</keyword>
<keyword id="KW-0689">Ribosomal protein</keyword>
<keyword id="KW-0694">RNA-binding</keyword>
<keyword id="KW-0699">rRNA-binding</keyword>